<gene>
    <name type="ORF">DDB_G0292438</name>
</gene>
<proteinExistence type="predicted"/>
<evidence type="ECO:0000256" key="1">
    <source>
        <dbReference type="SAM" id="MobiDB-lite"/>
    </source>
</evidence>
<organism>
    <name type="scientific">Dictyostelium discoideum</name>
    <name type="common">Social amoeba</name>
    <dbReference type="NCBI Taxonomy" id="44689"/>
    <lineage>
        <taxon>Eukaryota</taxon>
        <taxon>Amoebozoa</taxon>
        <taxon>Evosea</taxon>
        <taxon>Eumycetozoa</taxon>
        <taxon>Dictyostelia</taxon>
        <taxon>Dictyosteliales</taxon>
        <taxon>Dictyosteliaceae</taxon>
        <taxon>Dictyostelium</taxon>
    </lineage>
</organism>
<name>Y4395_DICDI</name>
<protein>
    <recommendedName>
        <fullName>Putative uncharacterized protein DDB_G0292438</fullName>
    </recommendedName>
</protein>
<reference key="1">
    <citation type="journal article" date="2005" name="Nature">
        <title>The genome of the social amoeba Dictyostelium discoideum.</title>
        <authorList>
            <person name="Eichinger L."/>
            <person name="Pachebat J.A."/>
            <person name="Gloeckner G."/>
            <person name="Rajandream M.A."/>
            <person name="Sucgang R."/>
            <person name="Berriman M."/>
            <person name="Song J."/>
            <person name="Olsen R."/>
            <person name="Szafranski K."/>
            <person name="Xu Q."/>
            <person name="Tunggal B."/>
            <person name="Kummerfeld S."/>
            <person name="Madera M."/>
            <person name="Konfortov B.A."/>
            <person name="Rivero F."/>
            <person name="Bankier A.T."/>
            <person name="Lehmann R."/>
            <person name="Hamlin N."/>
            <person name="Davies R."/>
            <person name="Gaudet P."/>
            <person name="Fey P."/>
            <person name="Pilcher K."/>
            <person name="Chen G."/>
            <person name="Saunders D."/>
            <person name="Sodergren E.J."/>
            <person name="Davis P."/>
            <person name="Kerhornou A."/>
            <person name="Nie X."/>
            <person name="Hall N."/>
            <person name="Anjard C."/>
            <person name="Hemphill L."/>
            <person name="Bason N."/>
            <person name="Farbrother P."/>
            <person name="Desany B."/>
            <person name="Just E."/>
            <person name="Morio T."/>
            <person name="Rost R."/>
            <person name="Churcher C.M."/>
            <person name="Cooper J."/>
            <person name="Haydock S."/>
            <person name="van Driessche N."/>
            <person name="Cronin A."/>
            <person name="Goodhead I."/>
            <person name="Muzny D.M."/>
            <person name="Mourier T."/>
            <person name="Pain A."/>
            <person name="Lu M."/>
            <person name="Harper D."/>
            <person name="Lindsay R."/>
            <person name="Hauser H."/>
            <person name="James K.D."/>
            <person name="Quiles M."/>
            <person name="Madan Babu M."/>
            <person name="Saito T."/>
            <person name="Buchrieser C."/>
            <person name="Wardroper A."/>
            <person name="Felder M."/>
            <person name="Thangavelu M."/>
            <person name="Johnson D."/>
            <person name="Knights A."/>
            <person name="Loulseged H."/>
            <person name="Mungall K.L."/>
            <person name="Oliver K."/>
            <person name="Price C."/>
            <person name="Quail M.A."/>
            <person name="Urushihara H."/>
            <person name="Hernandez J."/>
            <person name="Rabbinowitsch E."/>
            <person name="Steffen D."/>
            <person name="Sanders M."/>
            <person name="Ma J."/>
            <person name="Kohara Y."/>
            <person name="Sharp S."/>
            <person name="Simmonds M.N."/>
            <person name="Spiegler S."/>
            <person name="Tivey A."/>
            <person name="Sugano S."/>
            <person name="White B."/>
            <person name="Walker D."/>
            <person name="Woodward J.R."/>
            <person name="Winckler T."/>
            <person name="Tanaka Y."/>
            <person name="Shaulsky G."/>
            <person name="Schleicher M."/>
            <person name="Weinstock G.M."/>
            <person name="Rosenthal A."/>
            <person name="Cox E.C."/>
            <person name="Chisholm R.L."/>
            <person name="Gibbs R.A."/>
            <person name="Loomis W.F."/>
            <person name="Platzer M."/>
            <person name="Kay R.R."/>
            <person name="Williams J.G."/>
            <person name="Dear P.H."/>
            <person name="Noegel A.A."/>
            <person name="Barrell B.G."/>
            <person name="Kuspa A."/>
        </authorList>
    </citation>
    <scope>NUCLEOTIDE SEQUENCE [LARGE SCALE GENOMIC DNA]</scope>
    <source>
        <strain>AX4</strain>
    </source>
</reference>
<feature type="chain" id="PRO_0000344412" description="Putative uncharacterized protein DDB_G0292438">
    <location>
        <begin position="1"/>
        <end position="271"/>
    </location>
</feature>
<feature type="region of interest" description="Disordered" evidence="1">
    <location>
        <begin position="50"/>
        <end position="93"/>
    </location>
</feature>
<feature type="region of interest" description="Disordered" evidence="1">
    <location>
        <begin position="128"/>
        <end position="233"/>
    </location>
</feature>
<feature type="compositionally biased region" description="Low complexity" evidence="1">
    <location>
        <begin position="61"/>
        <end position="93"/>
    </location>
</feature>
<feature type="compositionally biased region" description="Low complexity" evidence="1">
    <location>
        <begin position="129"/>
        <end position="165"/>
    </location>
</feature>
<feature type="compositionally biased region" description="Basic and acidic residues" evidence="1">
    <location>
        <begin position="169"/>
        <end position="179"/>
    </location>
</feature>
<feature type="compositionally biased region" description="Acidic residues" evidence="1">
    <location>
        <begin position="180"/>
        <end position="199"/>
    </location>
</feature>
<feature type="compositionally biased region" description="Acidic residues" evidence="1">
    <location>
        <begin position="207"/>
        <end position="217"/>
    </location>
</feature>
<keyword id="KW-1185">Reference proteome</keyword>
<sequence length="271" mass="30638">MDPLANIKNEINLMNHRISSFATYVNYQLLEFKQSMSNIELMLQENIESKKKTKTDTEPNSPTKPLSTSIPTTTTAATSQSITSTSLSSSSSLSNQIAQPPIINGQVLNSSILTPTSRKKLSLVDIDKNNYNNYNNNNNNNNNNNNNNNNNNNNNNNNNNNNNNNVTTTDKKEGEKNENENENENENENENENENDIIEEDKIIEKMDEELENEQVEPVEQVKPKTQGGRKKVSKLTLDFGIGKRPVRTKTLTQLGIALEKEDTPKKRQRK</sequence>
<dbReference type="EMBL" id="AAFI02000190">
    <property type="protein sequence ID" value="EAL61198.1"/>
    <property type="molecule type" value="Genomic_DNA"/>
</dbReference>
<dbReference type="RefSeq" id="XP_629615.1">
    <property type="nucleotide sequence ID" value="XM_629613.1"/>
</dbReference>
<dbReference type="PaxDb" id="44689-DDB0184395"/>
<dbReference type="EnsemblProtists" id="EAL61198">
    <property type="protein sequence ID" value="EAL61198"/>
    <property type="gene ID" value="DDB_G0292438"/>
</dbReference>
<dbReference type="GeneID" id="8628678"/>
<dbReference type="KEGG" id="ddi:DDB_G0292438"/>
<dbReference type="dictyBase" id="DDB_G0292438"/>
<dbReference type="VEuPathDB" id="AmoebaDB:DDB_G0292438"/>
<dbReference type="HOGENOM" id="CLU_1028301_0_0_1"/>
<dbReference type="InParanoid" id="Q54D81"/>
<dbReference type="PRO" id="PR:Q54D81"/>
<dbReference type="Proteomes" id="UP000002195">
    <property type="component" value="Chromosome 6"/>
</dbReference>
<accession>Q54D81</accession>